<organism>
    <name type="scientific">Synechococcus elongatus (strain ATCC 33912 / PCC 7942 / FACHB-805)</name>
    <name type="common">Anacystis nidulans R2</name>
    <dbReference type="NCBI Taxonomy" id="1140"/>
    <lineage>
        <taxon>Bacteria</taxon>
        <taxon>Bacillati</taxon>
        <taxon>Cyanobacteriota</taxon>
        <taxon>Cyanophyceae</taxon>
        <taxon>Synechococcales</taxon>
        <taxon>Synechococcaceae</taxon>
        <taxon>Synechococcus</taxon>
    </lineage>
</organism>
<comment type="function">
    <text evidence="1">Component of the cytochrome b6-f complex, which mediates electron transfer between photosystem II (PSII) and photosystem I (PSI), cyclic electron flow around PSI, and state transitions.</text>
</comment>
<comment type="subunit">
    <text evidence="1">The 4 large subunits of the cytochrome b6-f complex are cytochrome b6, subunit IV (17 kDa polypeptide, PetD), cytochrome f and the Rieske protein, while the 4 small subunits are PetG, PetL, PetM and PetN. The complex functions as a dimer.</text>
</comment>
<comment type="subcellular location">
    <subcellularLocation>
        <location evidence="1">Cellular thylakoid membrane</location>
        <topology evidence="1">Multi-pass membrane protein</topology>
    </subcellularLocation>
</comment>
<comment type="similarity">
    <text evidence="1">Belongs to the cytochrome b family. PetD subfamily.</text>
</comment>
<protein>
    <recommendedName>
        <fullName evidence="1">Cytochrome b6-f complex subunit 4</fullName>
    </recommendedName>
    <alternativeName>
        <fullName evidence="1">17 kDa polypeptide</fullName>
    </alternativeName>
</protein>
<keyword id="KW-0249">Electron transport</keyword>
<keyword id="KW-0472">Membrane</keyword>
<keyword id="KW-0602">Photosynthesis</keyword>
<keyword id="KW-1185">Reference proteome</keyword>
<keyword id="KW-0793">Thylakoid</keyword>
<keyword id="KW-0812">Transmembrane</keyword>
<keyword id="KW-1133">Transmembrane helix</keyword>
<keyword id="KW-0813">Transport</keyword>
<proteinExistence type="inferred from homology"/>
<feature type="chain" id="PRO_0000061911" description="Cytochrome b6-f complex subunit 4">
    <location>
        <begin position="1"/>
        <end position="160"/>
    </location>
</feature>
<feature type="transmembrane region" description="Helical" evidence="1">
    <location>
        <begin position="36"/>
        <end position="56"/>
    </location>
</feature>
<feature type="transmembrane region" description="Helical" evidence="1">
    <location>
        <begin position="95"/>
        <end position="115"/>
    </location>
</feature>
<feature type="transmembrane region" description="Helical" evidence="1">
    <location>
        <begin position="131"/>
        <end position="151"/>
    </location>
</feature>
<sequence>MSILKKPDLSDPILRQKLAKGMGHNYYGEPAWPNDLLYMFPVVILGTIACLTGLAVLDPALVGEPADPFATPLEILPEWYLYPVFQILRIVPNKLLGIVLQSMIPLGLIAIPFIESVNKFQNPFRRPIATAVFLFGTVFTLYLGIGAALPIDKSLTLGLF</sequence>
<reference key="1">
    <citation type="journal article" date="1995" name="FEMS Microbiol. Lett.">
        <title>A comparison of gene organization in the zwf region of the genomes of the cyanobacteria Synechococcus sp. PCC 7942 and Anabaena sp. PCC 7120.</title>
        <authorList>
            <person name="Newman J."/>
            <person name="Karakaya H."/>
            <person name="Scanlan D.J."/>
            <person name="Mann N.H."/>
        </authorList>
    </citation>
    <scope>NUCLEOTIDE SEQUENCE [GENOMIC DNA]</scope>
</reference>
<reference key="2">
    <citation type="submission" date="2005-08" db="EMBL/GenBank/DDBJ databases">
        <title>Complete sequence of chromosome 1 of Synechococcus elongatus PCC 7942.</title>
        <authorList>
            <consortium name="US DOE Joint Genome Institute"/>
            <person name="Copeland A."/>
            <person name="Lucas S."/>
            <person name="Lapidus A."/>
            <person name="Barry K."/>
            <person name="Detter J.C."/>
            <person name="Glavina T."/>
            <person name="Hammon N."/>
            <person name="Israni S."/>
            <person name="Pitluck S."/>
            <person name="Schmutz J."/>
            <person name="Larimer F."/>
            <person name="Land M."/>
            <person name="Kyrpides N."/>
            <person name="Lykidis A."/>
            <person name="Golden S."/>
            <person name="Richardson P."/>
        </authorList>
    </citation>
    <scope>NUCLEOTIDE SEQUENCE [LARGE SCALE GENOMIC DNA]</scope>
    <source>
        <strain>ATCC 33912 / PCC 7942 / FACHB-805</strain>
    </source>
</reference>
<gene>
    <name evidence="1" type="primary">petD</name>
    <name type="ordered locus">Synpcc7942_2332</name>
</gene>
<evidence type="ECO:0000255" key="1">
    <source>
        <dbReference type="HAMAP-Rule" id="MF_01344"/>
    </source>
</evidence>
<name>PETD_SYNE7</name>
<accession>Q54710</accession>
<accession>Q31KQ7</accession>
<dbReference type="EMBL" id="U33285">
    <property type="protein sequence ID" value="AAA98849.1"/>
    <property type="molecule type" value="Genomic_DNA"/>
</dbReference>
<dbReference type="EMBL" id="CP000100">
    <property type="protein sequence ID" value="ABB58362.1"/>
    <property type="molecule type" value="Genomic_DNA"/>
</dbReference>
<dbReference type="RefSeq" id="WP_011244080.1">
    <property type="nucleotide sequence ID" value="NZ_JACJTX010000001.1"/>
</dbReference>
<dbReference type="SMR" id="Q54710"/>
<dbReference type="STRING" id="1140.Synpcc7942_2332"/>
<dbReference type="TCDB" id="3.D.3.5.3">
    <property type="family name" value="the proton-translocating quinol:cytochrome c reductase (qcr) superfamily"/>
</dbReference>
<dbReference type="PaxDb" id="1140-Synpcc7942_2332"/>
<dbReference type="GeneID" id="72431219"/>
<dbReference type="KEGG" id="syf:Synpcc7942_2332"/>
<dbReference type="eggNOG" id="COG1290">
    <property type="taxonomic scope" value="Bacteria"/>
</dbReference>
<dbReference type="HOGENOM" id="CLU_112652_0_0_3"/>
<dbReference type="OrthoDB" id="529454at2"/>
<dbReference type="BioCyc" id="MetaCyc:SYNPCC7942_2332-MONOMER"/>
<dbReference type="BioCyc" id="SYNEL:SYNPCC7942_2332-MONOMER"/>
<dbReference type="Proteomes" id="UP000889800">
    <property type="component" value="Chromosome"/>
</dbReference>
<dbReference type="GO" id="GO:0031676">
    <property type="term" value="C:plasma membrane-derived thylakoid membrane"/>
    <property type="evidence" value="ECO:0007669"/>
    <property type="project" value="UniProtKB-SubCell"/>
</dbReference>
<dbReference type="GO" id="GO:0045158">
    <property type="term" value="F:electron transporter, transferring electrons within cytochrome b6/f complex of photosystem II activity"/>
    <property type="evidence" value="ECO:0007669"/>
    <property type="project" value="UniProtKB-UniRule"/>
</dbReference>
<dbReference type="GO" id="GO:0045156">
    <property type="term" value="F:electron transporter, transferring electrons within the cyclic electron transport pathway of photosynthesis activity"/>
    <property type="evidence" value="ECO:0007669"/>
    <property type="project" value="InterPro"/>
</dbReference>
<dbReference type="GO" id="GO:0008121">
    <property type="term" value="F:ubiquinol-cytochrome-c reductase activity"/>
    <property type="evidence" value="ECO:0007669"/>
    <property type="project" value="TreeGrafter"/>
</dbReference>
<dbReference type="GO" id="GO:0009767">
    <property type="term" value="P:photosynthetic electron transport chain"/>
    <property type="evidence" value="ECO:0007669"/>
    <property type="project" value="InterPro"/>
</dbReference>
<dbReference type="CDD" id="cd00290">
    <property type="entry name" value="cytochrome_b_C"/>
    <property type="match status" value="1"/>
</dbReference>
<dbReference type="FunFam" id="1.10.287.980:FF:000001">
    <property type="entry name" value="Cytochrome b6-f complex subunit 4"/>
    <property type="match status" value="1"/>
</dbReference>
<dbReference type="FunFam" id="1.20.5.510:FF:000002">
    <property type="entry name" value="Cytochrome b6-f complex subunit 4"/>
    <property type="match status" value="1"/>
</dbReference>
<dbReference type="Gene3D" id="1.10.287.980">
    <property type="entry name" value="plastocyanin oxidoreductase"/>
    <property type="match status" value="1"/>
</dbReference>
<dbReference type="Gene3D" id="1.20.5.510">
    <property type="entry name" value="Single helix bin"/>
    <property type="match status" value="1"/>
</dbReference>
<dbReference type="HAMAP" id="MF_01344">
    <property type="entry name" value="Cytb6_f_subIV"/>
    <property type="match status" value="1"/>
</dbReference>
<dbReference type="InterPro" id="IPR005798">
    <property type="entry name" value="Cyt_b/b6_C"/>
</dbReference>
<dbReference type="InterPro" id="IPR036150">
    <property type="entry name" value="Cyt_b/b6_C_sf"/>
</dbReference>
<dbReference type="InterPro" id="IPR005870">
    <property type="entry name" value="Cyt_b6/f_cplx_suIV"/>
</dbReference>
<dbReference type="InterPro" id="IPR048260">
    <property type="entry name" value="Cytochrome_b_C_euk/bac"/>
</dbReference>
<dbReference type="NCBIfam" id="TIGR01156">
    <property type="entry name" value="cytb6_f_IV"/>
    <property type="match status" value="1"/>
</dbReference>
<dbReference type="PANTHER" id="PTHR19271">
    <property type="entry name" value="CYTOCHROME B"/>
    <property type="match status" value="1"/>
</dbReference>
<dbReference type="PANTHER" id="PTHR19271:SF41">
    <property type="entry name" value="CYTOCHROME B_B6 C-TERMINAL REGION PROFILE DOMAIN-CONTAINING PROTEIN"/>
    <property type="match status" value="1"/>
</dbReference>
<dbReference type="Pfam" id="PF00032">
    <property type="entry name" value="Cytochrom_B_C"/>
    <property type="match status" value="1"/>
</dbReference>
<dbReference type="PIRSF" id="PIRSF000033">
    <property type="entry name" value="B6f_17K"/>
    <property type="match status" value="1"/>
</dbReference>
<dbReference type="SUPFAM" id="SSF81648">
    <property type="entry name" value="a domain/subunit of cytochrome bc1 complex (Ubiquinol-cytochrome c reductase)"/>
    <property type="match status" value="1"/>
</dbReference>
<dbReference type="PROSITE" id="PS51003">
    <property type="entry name" value="CYTB_CTER"/>
    <property type="match status" value="1"/>
</dbReference>